<organismHost>
    <name type="scientific">Aves</name>
    <dbReference type="NCBI Taxonomy" id="8782"/>
</organismHost>
<organismHost>
    <name type="scientific">Felis catus</name>
    <name type="common">Cat</name>
    <name type="synonym">Felis silvestris catus</name>
    <dbReference type="NCBI Taxonomy" id="9685"/>
</organismHost>
<organismHost>
    <name type="scientific">Homo sapiens</name>
    <name type="common">Human</name>
    <dbReference type="NCBI Taxonomy" id="9606"/>
</organismHost>
<organismHost>
    <name type="scientific">Panthera pardus</name>
    <name type="common">Leopard</name>
    <name type="synonym">Felis pardus</name>
    <dbReference type="NCBI Taxonomy" id="9691"/>
</organismHost>
<organismHost>
    <name type="scientific">Panthera tigris</name>
    <name type="common">Tiger</name>
    <dbReference type="NCBI Taxonomy" id="9694"/>
</organismHost>
<organismHost>
    <name type="scientific">Sus scrofa</name>
    <name type="common">Pig</name>
    <dbReference type="NCBI Taxonomy" id="9823"/>
</organismHost>
<proteinExistence type="inferred from homology"/>
<organism>
    <name type="scientific">Influenza A virus (strain A/Chicken/Hong Kong/715.5/2001 H5N1 genotype E)</name>
    <dbReference type="NCBI Taxonomy" id="196434"/>
    <lineage>
        <taxon>Viruses</taxon>
        <taxon>Riboviria</taxon>
        <taxon>Orthornavirae</taxon>
        <taxon>Negarnaviricota</taxon>
        <taxon>Polyploviricotina</taxon>
        <taxon>Insthoviricetes</taxon>
        <taxon>Articulavirales</taxon>
        <taxon>Orthomyxoviridae</taxon>
        <taxon>Alphainfluenzavirus</taxon>
        <taxon>Alphainfluenzavirus influenzae</taxon>
        <taxon>Influenza A virus</taxon>
    </lineage>
</organism>
<evidence type="ECO:0000255" key="1">
    <source>
        <dbReference type="HAMAP-Rule" id="MF_04070"/>
    </source>
</evidence>
<evidence type="ECO:0000256" key="2">
    <source>
        <dbReference type="SAM" id="MobiDB-lite"/>
    </source>
</evidence>
<accession>Q809S1</accession>
<feature type="chain" id="PRO_0000310918" description="Nucleoprotein">
    <location>
        <begin position="1"/>
        <end position="498"/>
    </location>
</feature>
<feature type="region of interest" description="Disordered" evidence="2">
    <location>
        <begin position="1"/>
        <end position="21"/>
    </location>
</feature>
<feature type="short sequence motif" description="Unconventional nuclear localization signal" evidence="1">
    <location>
        <begin position="1"/>
        <end position="18"/>
    </location>
</feature>
<feature type="short sequence motif" description="Bipartite nuclear localization signal" evidence="1">
    <location>
        <begin position="198"/>
        <end position="216"/>
    </location>
</feature>
<keyword id="KW-0167">Capsid protein</keyword>
<keyword id="KW-1139">Helical capsid protein</keyword>
<keyword id="KW-1048">Host nucleus</keyword>
<keyword id="KW-0945">Host-virus interaction</keyword>
<keyword id="KW-0687">Ribonucleoprotein</keyword>
<keyword id="KW-0694">RNA-binding</keyword>
<keyword id="KW-0543">Viral nucleoprotein</keyword>
<keyword id="KW-1163">Viral penetration into host nucleus</keyword>
<keyword id="KW-0946">Virion</keyword>
<keyword id="KW-1160">Virus entry into host cell</keyword>
<reference key="1">
    <citation type="journal article" date="2002" name="Proc. Natl. Acad. Sci. U.S.A.">
        <title>Emergence of multiple genotypes of H5N1 avian influenza viruses in Hong Kong SAR.</title>
        <authorList>
            <person name="Guan Y."/>
            <person name="Peiris J.S.M."/>
            <person name="Lipatov A.S."/>
            <person name="Ellis T.M."/>
            <person name="Dyrting K.C."/>
            <person name="Krauss S."/>
            <person name="Zhang L.J."/>
            <person name="Webster R.G."/>
            <person name="Shortridge K.F."/>
        </authorList>
    </citation>
    <scope>NUCLEOTIDE SEQUENCE [GENOMIC RNA]</scope>
</reference>
<reference key="2">
    <citation type="submission" date="2008-03" db="EMBL/GenBank/DDBJ databases">
        <authorList>
            <person name="Li K.S."/>
            <person name="Xu K.M."/>
            <person name="Guan Y."/>
        </authorList>
    </citation>
    <scope>SEQUENCE REVISION</scope>
</reference>
<name>NCAP_I01A3</name>
<protein>
    <recommendedName>
        <fullName evidence="1">Nucleoprotein</fullName>
    </recommendedName>
    <alternativeName>
        <fullName evidence="1">Nucleocapsid protein</fullName>
        <shortName evidence="1">Protein N</shortName>
    </alternativeName>
</protein>
<sequence length="498" mass="56334">MASQGTKRSYEQMETGGERQNATEIRASVGRMVSGIGRFYIQMCTELKLSDYEGRLIQNSITIERMVLSAFDERRNRYLEEHPSAGKDPKKTGGPIYRRRDGKWVRELILYDKEEIRRIWRQANNGEDATAGLTHLMIWHSNLNDATYQRTRALVRTGMDPRMCSLMQGSTLPRRSGAAGAAVKGVGTMVMELIRMIKRGINDRNFWRGENGRRTRIAYERMCNILKGKFQTAAQRAMMDQVRESRNPGNAEIEDLIFLARSALILRGSVAHKSCLPACVYGLAVASGYDFEREGYSLVGIDPFRLLQNSQVFSLIRPNENPAHKSQLVWMACHSAAFEDLRVSSFIRGTRVVPRGQLSTRGVQIASNENMEAMDSNTLELRSRYWAIRTRSGGNTNQQRASAGQISVQPTFSVQRNLPFERATIMAAFTGNTEGRTSDMRTEIIRMMESARPEDVSFQGRGVFELSDEKATNPIVPSFDMNNEGSYFFGDNAEEYDN</sequence>
<dbReference type="EMBL" id="AF509126">
    <property type="protein sequence ID" value="AAO52969.2"/>
    <property type="molecule type" value="Genomic_DNA"/>
</dbReference>
<dbReference type="SMR" id="Q809S1"/>
<dbReference type="GO" id="GO:0019029">
    <property type="term" value="C:helical viral capsid"/>
    <property type="evidence" value="ECO:0007669"/>
    <property type="project" value="UniProtKB-UniRule"/>
</dbReference>
<dbReference type="GO" id="GO:0043657">
    <property type="term" value="C:host cell"/>
    <property type="evidence" value="ECO:0007669"/>
    <property type="project" value="GOC"/>
</dbReference>
<dbReference type="GO" id="GO:0042025">
    <property type="term" value="C:host cell nucleus"/>
    <property type="evidence" value="ECO:0007669"/>
    <property type="project" value="UniProtKB-SubCell"/>
</dbReference>
<dbReference type="GO" id="GO:1990904">
    <property type="term" value="C:ribonucleoprotein complex"/>
    <property type="evidence" value="ECO:0007669"/>
    <property type="project" value="UniProtKB-KW"/>
</dbReference>
<dbReference type="GO" id="GO:0019013">
    <property type="term" value="C:viral nucleocapsid"/>
    <property type="evidence" value="ECO:0007669"/>
    <property type="project" value="UniProtKB-UniRule"/>
</dbReference>
<dbReference type="GO" id="GO:0003723">
    <property type="term" value="F:RNA binding"/>
    <property type="evidence" value="ECO:0007669"/>
    <property type="project" value="UniProtKB-UniRule"/>
</dbReference>
<dbReference type="GO" id="GO:0005198">
    <property type="term" value="F:structural molecule activity"/>
    <property type="evidence" value="ECO:0007669"/>
    <property type="project" value="UniProtKB-UniRule"/>
</dbReference>
<dbReference type="GO" id="GO:0046718">
    <property type="term" value="P:symbiont entry into host cell"/>
    <property type="evidence" value="ECO:0007669"/>
    <property type="project" value="UniProtKB-KW"/>
</dbReference>
<dbReference type="GO" id="GO:0075732">
    <property type="term" value="P:viral penetration into host nucleus"/>
    <property type="evidence" value="ECO:0007669"/>
    <property type="project" value="UniProtKB-UniRule"/>
</dbReference>
<dbReference type="HAMAP" id="MF_04070">
    <property type="entry name" value="INFV_NCAP"/>
    <property type="match status" value="1"/>
</dbReference>
<dbReference type="InterPro" id="IPR002141">
    <property type="entry name" value="Flu_NP"/>
</dbReference>
<dbReference type="Pfam" id="PF00506">
    <property type="entry name" value="Flu_NP"/>
    <property type="match status" value="1"/>
</dbReference>
<dbReference type="SUPFAM" id="SSF161003">
    <property type="entry name" value="flu NP-like"/>
    <property type="match status" value="1"/>
</dbReference>
<gene>
    <name evidence="1" type="primary">NP</name>
</gene>
<comment type="function">
    <text evidence="1">Encapsidates the negative strand viral RNA, protecting it from nucleases. The encapsidated genomic RNA is termed the ribonucleoprotein (RNP) and serves as template for transcription and replication. The RNP needs to be localized in the host nucleus to start an infectious cycle, but is too large to diffuse through the nuclear pore complex. NP comprises at least 2 nuclear localization signals that are responsible for the active RNP import into the nucleus through cellular importin alpha/beta pathway. Later in the infection, nclear export of RNPs are mediated through viral proteins NEP interacting with M1 which binds nucleoproteins. It is possible that nucleoprotein binds directly host exportin-1/XPO1 and plays an active role in RNPs nuclear export. M1 interaction with RNP seems to hide nucleoprotein's nuclear localization signals. Soon after a virion infects a new cell, M1 dissociates from the RNP under acidification of the virion driven by M2 protein. Dissociation of M1 from RNP unmasks nucleoprotein's nuclear localization signals, targeting the RNP to the nucleus.</text>
</comment>
<comment type="subunit">
    <text evidence="1">Homomultimerizes to form the nucleocapsid. May bind host exportin-1/XPO1. Binds to viral genomic RNA. Protein-RNA contacts are mediated by a combination of electrostatic interactions between positively charged residues and the phosphate backbone and planar interactions between aromatic side chains and bases.</text>
</comment>
<comment type="subcellular location">
    <subcellularLocation>
        <location evidence="1">Virion</location>
    </subcellularLocation>
    <subcellularLocation>
        <location evidence="1">Host nucleus</location>
    </subcellularLocation>
</comment>
<comment type="PTM">
    <text evidence="1">Late in virus-infected cells, may be cleaved from a 56-kDa protein to a 53-kDa protein by a cellular caspase. This cleavage might be a marker for the onset of apoptosis in infected cells or have a specific function in virus host interaction.</text>
</comment>
<comment type="similarity">
    <text evidence="1">Belongs to the influenza viruses nucleoprotein family.</text>
</comment>